<reference key="1">
    <citation type="journal article" date="1986" name="J. Mol. Biol.">
        <title>Gene regulation and evolution in the chorion locus of Bombyx mori. Structural and developmental characterization of four eggshell genes and their flanking DNA regions.</title>
        <authorList>
            <person name="Spoerel N."/>
            <person name="Nguyen H.T."/>
            <person name="Kafatos F.C."/>
        </authorList>
    </citation>
    <scope>NUCLEOTIDE SEQUENCE [GENOMIC DNA]</scope>
    <source>
        <strain>703</strain>
    </source>
</reference>
<keyword id="KW-1185">Reference proteome</keyword>
<keyword id="KW-0677">Repeat</keyword>
<keyword id="KW-0732">Signal</keyword>
<protein>
    <recommendedName>
        <fullName>Chorion class B protein L12</fullName>
    </recommendedName>
</protein>
<evidence type="ECO:0000305" key="1"/>
<organism>
    <name type="scientific">Bombyx mori</name>
    <name type="common">Silk moth</name>
    <dbReference type="NCBI Taxonomy" id="7091"/>
    <lineage>
        <taxon>Eukaryota</taxon>
        <taxon>Metazoa</taxon>
        <taxon>Ecdysozoa</taxon>
        <taxon>Arthropoda</taxon>
        <taxon>Hexapoda</taxon>
        <taxon>Insecta</taxon>
        <taxon>Pterygota</taxon>
        <taxon>Neoptera</taxon>
        <taxon>Endopterygota</taxon>
        <taxon>Lepidoptera</taxon>
        <taxon>Glossata</taxon>
        <taxon>Ditrysia</taxon>
        <taxon>Bombycoidea</taxon>
        <taxon>Bombycidae</taxon>
        <taxon>Bombycinae</taxon>
        <taxon>Bombyx</taxon>
    </lineage>
</organism>
<name>CHB2_BOMMO</name>
<feature type="signal peptide">
    <location>
        <begin position="1"/>
        <end position="21"/>
    </location>
</feature>
<feature type="chain" id="PRO_0000005384" description="Chorion class B protein L12">
    <location>
        <begin position="22"/>
        <end position="161"/>
    </location>
</feature>
<feature type="repeat" description="1">
    <location>
        <begin position="30"/>
        <end position="34"/>
    </location>
</feature>
<feature type="repeat" description="2">
    <location>
        <begin position="35"/>
        <end position="39"/>
    </location>
</feature>
<feature type="repeat" description="3">
    <location>
        <begin position="40"/>
        <end position="44"/>
    </location>
</feature>
<feature type="region of interest" description="Left arm">
    <location>
        <begin position="22"/>
        <end position="52"/>
    </location>
</feature>
<feature type="region of interest" description="3 X 5 AA tandem repeats of G-Y-G-G-L">
    <location>
        <begin position="30"/>
        <end position="44"/>
    </location>
</feature>
<feature type="region of interest" description="Central domain">
    <location>
        <begin position="53"/>
        <end position="121"/>
    </location>
</feature>
<feature type="region of interest" description="Right arm (Gly-rich tandem repeats)">
    <location>
        <begin position="122"/>
        <end position="161"/>
    </location>
</feature>
<sequence length="161" mass="15123">MAAKLILFVCATALVAQSVLSIGCGCGGRGYGGLGYGGLGYGGLGGGCGRGFSGGGLPVATASAAPTGLGIASENRYEGTVGVCGNLPFLGTADVAGEFPTAGIGEIDYGCGNGAVGITREGGFGYGAGYGDGYGLGFGGYGGGYGLGNGGYGGCGCGWGY</sequence>
<dbReference type="EMBL" id="X15557">
    <property type="protein sequence ID" value="CAA33564.1"/>
    <property type="molecule type" value="Genomic_DNA"/>
</dbReference>
<dbReference type="STRING" id="7091.P08828"/>
<dbReference type="InParanoid" id="P08828"/>
<dbReference type="Proteomes" id="UP000005204">
    <property type="component" value="Unassembled WGS sequence"/>
</dbReference>
<dbReference type="GO" id="GO:0042600">
    <property type="term" value="C:egg chorion"/>
    <property type="evidence" value="ECO:0007669"/>
    <property type="project" value="InterPro"/>
</dbReference>
<dbReference type="GO" id="GO:0005213">
    <property type="term" value="F:structural constituent of egg chorion"/>
    <property type="evidence" value="ECO:0007669"/>
    <property type="project" value="InterPro"/>
</dbReference>
<dbReference type="GO" id="GO:0007304">
    <property type="term" value="P:chorion-containing eggshell formation"/>
    <property type="evidence" value="ECO:0007669"/>
    <property type="project" value="InterPro"/>
</dbReference>
<dbReference type="InterPro" id="IPR002635">
    <property type="entry name" value="Chorion"/>
</dbReference>
<dbReference type="Pfam" id="PF01723">
    <property type="entry name" value="Chorion_1"/>
    <property type="match status" value="1"/>
</dbReference>
<accession>P08828</accession>
<proteinExistence type="inferred from homology"/>
<comment type="function">
    <text>This protein is one of many from the eggshell of the silk moth.</text>
</comment>
<comment type="similarity">
    <text evidence="1">Belongs to the chorion protein family.</text>
</comment>